<sequence length="103" mass="11622">MGKLTLLLLAILVWLQYSLWFGKNGIHDYTRVNDDVAAQQATNAKLKARNDQLFAEIDDLNGGQEALEERARNELSMTRPGETFYRLVPDASKRAQSAGQNNR</sequence>
<protein>
    <recommendedName>
        <fullName evidence="1">Cell division protein FtsB</fullName>
    </recommendedName>
</protein>
<comment type="function">
    <text evidence="1">Essential cell division protein. May link together the upstream cell division proteins, which are predominantly cytoplasmic, with the downstream cell division proteins, which are predominantly periplasmic.</text>
</comment>
<comment type="subunit">
    <text evidence="1">Part of a complex composed of FtsB, FtsL and FtsQ.</text>
</comment>
<comment type="subcellular location">
    <subcellularLocation>
        <location evidence="1">Cell inner membrane</location>
        <topology evidence="1">Single-pass type II membrane protein</topology>
    </subcellularLocation>
    <text evidence="1">Localizes to the division septum.</text>
</comment>
<comment type="similarity">
    <text evidence="1">Belongs to the FtsB family.</text>
</comment>
<evidence type="ECO:0000255" key="1">
    <source>
        <dbReference type="HAMAP-Rule" id="MF_00599"/>
    </source>
</evidence>
<name>FTSB_ECO8A</name>
<organism>
    <name type="scientific">Escherichia coli O8 (strain IAI1)</name>
    <dbReference type="NCBI Taxonomy" id="585034"/>
    <lineage>
        <taxon>Bacteria</taxon>
        <taxon>Pseudomonadati</taxon>
        <taxon>Pseudomonadota</taxon>
        <taxon>Gammaproteobacteria</taxon>
        <taxon>Enterobacterales</taxon>
        <taxon>Enterobacteriaceae</taxon>
        <taxon>Escherichia</taxon>
    </lineage>
</organism>
<proteinExistence type="inferred from homology"/>
<dbReference type="EMBL" id="CU928160">
    <property type="protein sequence ID" value="CAQ99672.1"/>
    <property type="molecule type" value="Genomic_DNA"/>
</dbReference>
<dbReference type="RefSeq" id="WP_000517476.1">
    <property type="nucleotide sequence ID" value="NC_011741.1"/>
</dbReference>
<dbReference type="SMR" id="B7LXG0"/>
<dbReference type="GeneID" id="93779258"/>
<dbReference type="KEGG" id="ecr:ECIAI1_2849"/>
<dbReference type="HOGENOM" id="CLU_134863_5_2_6"/>
<dbReference type="GO" id="GO:0032153">
    <property type="term" value="C:cell division site"/>
    <property type="evidence" value="ECO:0007669"/>
    <property type="project" value="UniProtKB-UniRule"/>
</dbReference>
<dbReference type="GO" id="GO:0030428">
    <property type="term" value="C:cell septum"/>
    <property type="evidence" value="ECO:0007669"/>
    <property type="project" value="TreeGrafter"/>
</dbReference>
<dbReference type="GO" id="GO:0005886">
    <property type="term" value="C:plasma membrane"/>
    <property type="evidence" value="ECO:0007669"/>
    <property type="project" value="UniProtKB-SubCell"/>
</dbReference>
<dbReference type="GO" id="GO:0043093">
    <property type="term" value="P:FtsZ-dependent cytokinesis"/>
    <property type="evidence" value="ECO:0007669"/>
    <property type="project" value="UniProtKB-UniRule"/>
</dbReference>
<dbReference type="FunFam" id="1.20.5.400:FF:000001">
    <property type="entry name" value="Cell division protein FtsB"/>
    <property type="match status" value="1"/>
</dbReference>
<dbReference type="Gene3D" id="1.20.5.400">
    <property type="match status" value="1"/>
</dbReference>
<dbReference type="HAMAP" id="MF_00599">
    <property type="entry name" value="FtsB"/>
    <property type="match status" value="1"/>
</dbReference>
<dbReference type="InterPro" id="IPR023081">
    <property type="entry name" value="Cell_div_FtsB"/>
</dbReference>
<dbReference type="InterPro" id="IPR007060">
    <property type="entry name" value="FtsL/DivIC"/>
</dbReference>
<dbReference type="NCBIfam" id="NF002058">
    <property type="entry name" value="PRK00888.1"/>
    <property type="match status" value="1"/>
</dbReference>
<dbReference type="PANTHER" id="PTHR37485">
    <property type="entry name" value="CELL DIVISION PROTEIN FTSB"/>
    <property type="match status" value="1"/>
</dbReference>
<dbReference type="PANTHER" id="PTHR37485:SF1">
    <property type="entry name" value="CELL DIVISION PROTEIN FTSB"/>
    <property type="match status" value="1"/>
</dbReference>
<dbReference type="Pfam" id="PF04977">
    <property type="entry name" value="DivIC"/>
    <property type="match status" value="1"/>
</dbReference>
<keyword id="KW-0131">Cell cycle</keyword>
<keyword id="KW-0132">Cell division</keyword>
<keyword id="KW-0997">Cell inner membrane</keyword>
<keyword id="KW-1003">Cell membrane</keyword>
<keyword id="KW-0175">Coiled coil</keyword>
<keyword id="KW-0472">Membrane</keyword>
<keyword id="KW-0812">Transmembrane</keyword>
<keyword id="KW-1133">Transmembrane helix</keyword>
<gene>
    <name evidence="1" type="primary">ftsB</name>
    <name type="ordered locus">ECIAI1_2849</name>
</gene>
<feature type="chain" id="PRO_1000129925" description="Cell division protein FtsB">
    <location>
        <begin position="1"/>
        <end position="103"/>
    </location>
</feature>
<feature type="topological domain" description="Cytoplasmic" evidence="1">
    <location>
        <begin position="1"/>
        <end position="3"/>
    </location>
</feature>
<feature type="transmembrane region" description="Helical" evidence="1">
    <location>
        <begin position="4"/>
        <end position="21"/>
    </location>
</feature>
<feature type="topological domain" description="Periplasmic" evidence="1">
    <location>
        <begin position="22"/>
        <end position="103"/>
    </location>
</feature>
<feature type="coiled-coil region" evidence="1">
    <location>
        <begin position="31"/>
        <end position="71"/>
    </location>
</feature>
<reference key="1">
    <citation type="journal article" date="2009" name="PLoS Genet.">
        <title>Organised genome dynamics in the Escherichia coli species results in highly diverse adaptive paths.</title>
        <authorList>
            <person name="Touchon M."/>
            <person name="Hoede C."/>
            <person name="Tenaillon O."/>
            <person name="Barbe V."/>
            <person name="Baeriswyl S."/>
            <person name="Bidet P."/>
            <person name="Bingen E."/>
            <person name="Bonacorsi S."/>
            <person name="Bouchier C."/>
            <person name="Bouvet O."/>
            <person name="Calteau A."/>
            <person name="Chiapello H."/>
            <person name="Clermont O."/>
            <person name="Cruveiller S."/>
            <person name="Danchin A."/>
            <person name="Diard M."/>
            <person name="Dossat C."/>
            <person name="Karoui M.E."/>
            <person name="Frapy E."/>
            <person name="Garry L."/>
            <person name="Ghigo J.M."/>
            <person name="Gilles A.M."/>
            <person name="Johnson J."/>
            <person name="Le Bouguenec C."/>
            <person name="Lescat M."/>
            <person name="Mangenot S."/>
            <person name="Martinez-Jehanne V."/>
            <person name="Matic I."/>
            <person name="Nassif X."/>
            <person name="Oztas S."/>
            <person name="Petit M.A."/>
            <person name="Pichon C."/>
            <person name="Rouy Z."/>
            <person name="Ruf C.S."/>
            <person name="Schneider D."/>
            <person name="Tourret J."/>
            <person name="Vacherie B."/>
            <person name="Vallenet D."/>
            <person name="Medigue C."/>
            <person name="Rocha E.P.C."/>
            <person name="Denamur E."/>
        </authorList>
    </citation>
    <scope>NUCLEOTIDE SEQUENCE [LARGE SCALE GENOMIC DNA]</scope>
    <source>
        <strain>IAI1</strain>
    </source>
</reference>
<accession>B7LXG0</accession>